<keyword id="KW-1003">Cell membrane</keyword>
<keyword id="KW-0444">Lipid biosynthesis</keyword>
<keyword id="KW-0443">Lipid metabolism</keyword>
<keyword id="KW-0472">Membrane</keyword>
<keyword id="KW-0594">Phospholipid biosynthesis</keyword>
<keyword id="KW-1208">Phospholipid metabolism</keyword>
<keyword id="KW-0808">Transferase</keyword>
<keyword id="KW-0812">Transmembrane</keyword>
<keyword id="KW-1133">Transmembrane helix</keyword>
<feature type="chain" id="PRO_1000136064" description="Glycerol-3-phosphate acyltransferase">
    <location>
        <begin position="1"/>
        <end position="198"/>
    </location>
</feature>
<feature type="transmembrane region" description="Helical" evidence="1">
    <location>
        <begin position="4"/>
        <end position="24"/>
    </location>
</feature>
<feature type="transmembrane region" description="Helical" evidence="1">
    <location>
        <begin position="71"/>
        <end position="91"/>
    </location>
</feature>
<feature type="transmembrane region" description="Helical" evidence="1">
    <location>
        <begin position="113"/>
        <end position="133"/>
    </location>
</feature>
<feature type="transmembrane region" description="Helical" evidence="1">
    <location>
        <begin position="147"/>
        <end position="167"/>
    </location>
</feature>
<organism>
    <name type="scientific">Bacillus cereus (strain G9842)</name>
    <dbReference type="NCBI Taxonomy" id="405531"/>
    <lineage>
        <taxon>Bacteria</taxon>
        <taxon>Bacillati</taxon>
        <taxon>Bacillota</taxon>
        <taxon>Bacilli</taxon>
        <taxon>Bacillales</taxon>
        <taxon>Bacillaceae</taxon>
        <taxon>Bacillus</taxon>
        <taxon>Bacillus cereus group</taxon>
    </lineage>
</organism>
<dbReference type="EC" id="2.3.1.275" evidence="1"/>
<dbReference type="EMBL" id="CP001186">
    <property type="protein sequence ID" value="ACK96561.1"/>
    <property type="molecule type" value="Genomic_DNA"/>
</dbReference>
<dbReference type="RefSeq" id="WP_000258974.1">
    <property type="nucleotide sequence ID" value="NC_011772.1"/>
</dbReference>
<dbReference type="SMR" id="B7IRQ1"/>
<dbReference type="GeneID" id="72450272"/>
<dbReference type="KEGG" id="bcg:BCG9842_B1603"/>
<dbReference type="HOGENOM" id="CLU_081254_4_0_9"/>
<dbReference type="UniPathway" id="UPA00085"/>
<dbReference type="Proteomes" id="UP000006744">
    <property type="component" value="Chromosome"/>
</dbReference>
<dbReference type="GO" id="GO:0005886">
    <property type="term" value="C:plasma membrane"/>
    <property type="evidence" value="ECO:0007669"/>
    <property type="project" value="UniProtKB-SubCell"/>
</dbReference>
<dbReference type="GO" id="GO:0043772">
    <property type="term" value="F:acyl-phosphate glycerol-3-phosphate acyltransferase activity"/>
    <property type="evidence" value="ECO:0007669"/>
    <property type="project" value="UniProtKB-UniRule"/>
</dbReference>
<dbReference type="GO" id="GO:0008654">
    <property type="term" value="P:phospholipid biosynthetic process"/>
    <property type="evidence" value="ECO:0007669"/>
    <property type="project" value="UniProtKB-UniRule"/>
</dbReference>
<dbReference type="HAMAP" id="MF_01043">
    <property type="entry name" value="PlsY"/>
    <property type="match status" value="1"/>
</dbReference>
<dbReference type="InterPro" id="IPR003811">
    <property type="entry name" value="G3P_acylTferase_PlsY"/>
</dbReference>
<dbReference type="NCBIfam" id="TIGR00023">
    <property type="entry name" value="glycerol-3-phosphate 1-O-acyltransferase PlsY"/>
    <property type="match status" value="1"/>
</dbReference>
<dbReference type="PANTHER" id="PTHR30309:SF0">
    <property type="entry name" value="GLYCEROL-3-PHOSPHATE ACYLTRANSFERASE-RELATED"/>
    <property type="match status" value="1"/>
</dbReference>
<dbReference type="PANTHER" id="PTHR30309">
    <property type="entry name" value="INNER MEMBRANE PROTEIN YGIH"/>
    <property type="match status" value="1"/>
</dbReference>
<dbReference type="Pfam" id="PF02660">
    <property type="entry name" value="G3P_acyltransf"/>
    <property type="match status" value="1"/>
</dbReference>
<dbReference type="SMART" id="SM01207">
    <property type="entry name" value="G3P_acyltransf"/>
    <property type="match status" value="1"/>
</dbReference>
<protein>
    <recommendedName>
        <fullName evidence="1">Glycerol-3-phosphate acyltransferase</fullName>
    </recommendedName>
    <alternativeName>
        <fullName evidence="1">Acyl-PO4 G3P acyltransferase</fullName>
    </alternativeName>
    <alternativeName>
        <fullName evidence="1">Acyl-phosphate--glycerol-3-phosphate acyltransferase</fullName>
    </alternativeName>
    <alternativeName>
        <fullName evidence="1">G3P acyltransferase</fullName>
        <shortName evidence="1">GPAT</shortName>
        <ecNumber evidence="1">2.3.1.275</ecNumber>
    </alternativeName>
    <alternativeName>
        <fullName evidence="1">Lysophosphatidic acid synthase</fullName>
        <shortName evidence="1">LPA synthase</shortName>
    </alternativeName>
</protein>
<name>PLSY_BACC2</name>
<proteinExistence type="inferred from homology"/>
<reference key="1">
    <citation type="submission" date="2008-10" db="EMBL/GenBank/DDBJ databases">
        <title>Genome sequence of Bacillus cereus G9842.</title>
        <authorList>
            <person name="Dodson R.J."/>
            <person name="Durkin A.S."/>
            <person name="Rosovitz M.J."/>
            <person name="Rasko D.A."/>
            <person name="Hoffmaster A."/>
            <person name="Ravel J."/>
            <person name="Sutton G."/>
        </authorList>
    </citation>
    <scope>NUCLEOTIDE SEQUENCE [LARGE SCALE GENOMIC DNA]</scope>
    <source>
        <strain>G9842</strain>
    </source>
</reference>
<evidence type="ECO:0000255" key="1">
    <source>
        <dbReference type="HAMAP-Rule" id="MF_01043"/>
    </source>
</evidence>
<sequence>MVTTYLLFIVAYLLGSIPFALVVGKIGYGIDIREHGSGNLGGTNTFRTLGKKAGFTVTIADILKGTLATSLPMIFGLDIHPLWFGLAAVLGHVYPIFAKFRGGKAVATSAGVLLCYSPVVFAILAVVFFTLLFTTRYVSLSSMVTAVVAVIASIVSGDKIFIIAMCLLAGMVIYKHRANIGRIINKTEPKANFSKKQK</sequence>
<comment type="function">
    <text evidence="1">Catalyzes the transfer of an acyl group from acyl-phosphate (acyl-PO(4)) to glycerol-3-phosphate (G3P) to form lysophosphatidic acid (LPA). This enzyme utilizes acyl-phosphate as fatty acyl donor, but not acyl-CoA or acyl-ACP.</text>
</comment>
<comment type="catalytic activity">
    <reaction evidence="1">
        <text>an acyl phosphate + sn-glycerol 3-phosphate = a 1-acyl-sn-glycero-3-phosphate + phosphate</text>
        <dbReference type="Rhea" id="RHEA:34075"/>
        <dbReference type="ChEBI" id="CHEBI:43474"/>
        <dbReference type="ChEBI" id="CHEBI:57597"/>
        <dbReference type="ChEBI" id="CHEBI:57970"/>
        <dbReference type="ChEBI" id="CHEBI:59918"/>
        <dbReference type="EC" id="2.3.1.275"/>
    </reaction>
</comment>
<comment type="pathway">
    <text evidence="1">Lipid metabolism; phospholipid metabolism.</text>
</comment>
<comment type="subunit">
    <text evidence="1">Probably interacts with PlsX.</text>
</comment>
<comment type="subcellular location">
    <subcellularLocation>
        <location evidence="1">Cell membrane</location>
        <topology evidence="1">Multi-pass membrane protein</topology>
    </subcellularLocation>
</comment>
<comment type="similarity">
    <text evidence="1">Belongs to the PlsY family.</text>
</comment>
<accession>B7IRQ1</accession>
<gene>
    <name evidence="1" type="primary">plsY</name>
    <name type="ordered locus">BCG9842_B1603</name>
</gene>